<keyword id="KW-0028">Amino-acid biosynthesis</keyword>
<keyword id="KW-0067">ATP-binding</keyword>
<keyword id="KW-0963">Cytoplasm</keyword>
<keyword id="KW-0418">Kinase</keyword>
<keyword id="KW-0547">Nucleotide-binding</keyword>
<keyword id="KW-1185">Reference proteome</keyword>
<keyword id="KW-0791">Threonine biosynthesis</keyword>
<keyword id="KW-0808">Transferase</keyword>
<accession>C5A1P1</accession>
<feature type="chain" id="PRO_1000205747" description="Homoserine kinase">
    <location>
        <begin position="1"/>
        <end position="292"/>
    </location>
</feature>
<feature type="binding site" evidence="1">
    <location>
        <begin position="81"/>
        <end position="91"/>
    </location>
    <ligand>
        <name>ATP</name>
        <dbReference type="ChEBI" id="CHEBI:30616"/>
    </ligand>
</feature>
<comment type="function">
    <text evidence="1">Catalyzes the ATP-dependent phosphorylation of L-homoserine to L-homoserine phosphate.</text>
</comment>
<comment type="catalytic activity">
    <reaction evidence="1">
        <text>L-homoserine + ATP = O-phospho-L-homoserine + ADP + H(+)</text>
        <dbReference type="Rhea" id="RHEA:13985"/>
        <dbReference type="ChEBI" id="CHEBI:15378"/>
        <dbReference type="ChEBI" id="CHEBI:30616"/>
        <dbReference type="ChEBI" id="CHEBI:57476"/>
        <dbReference type="ChEBI" id="CHEBI:57590"/>
        <dbReference type="ChEBI" id="CHEBI:456216"/>
        <dbReference type="EC" id="2.7.1.39"/>
    </reaction>
</comment>
<comment type="pathway">
    <text evidence="1">Amino-acid biosynthesis; L-threonine biosynthesis; L-threonine from L-aspartate: step 4/5.</text>
</comment>
<comment type="subcellular location">
    <subcellularLocation>
        <location evidence="1">Cytoplasm</location>
    </subcellularLocation>
</comment>
<comment type="similarity">
    <text evidence="1">Belongs to the GHMP kinase family. Homoserine kinase subfamily.</text>
</comment>
<gene>
    <name evidence="1" type="primary">thrB</name>
    <name type="ordered locus">TGAM_1808</name>
</gene>
<name>KHSE_THEGJ</name>
<reference key="1">
    <citation type="journal article" date="2007" name="Genome Biol.">
        <title>Genome analysis and genome-wide proteomics of Thermococcus gammatolerans, the most radioresistant organism known amongst the Archaea.</title>
        <authorList>
            <person name="Zivanovic Y."/>
            <person name="Armengaud J."/>
            <person name="Lagorce A."/>
            <person name="Leplat C."/>
            <person name="Guerin P."/>
            <person name="Dutertre M."/>
            <person name="Anthouard V."/>
            <person name="Forterre P."/>
            <person name="Wincker P."/>
            <person name="Confalonieri F."/>
        </authorList>
    </citation>
    <scope>NUCLEOTIDE SEQUENCE [LARGE SCALE GENOMIC DNA]</scope>
    <source>
        <strain>DSM 15229 / JCM 11827 / EJ3</strain>
    </source>
</reference>
<protein>
    <recommendedName>
        <fullName evidence="1">Homoserine kinase</fullName>
        <shortName evidence="1">HK</shortName>
        <shortName evidence="1">HSK</shortName>
        <ecNumber evidence="1">2.7.1.39</ecNumber>
    </recommendedName>
</protein>
<evidence type="ECO:0000255" key="1">
    <source>
        <dbReference type="HAMAP-Rule" id="MF_00384"/>
    </source>
</evidence>
<proteinExistence type="inferred from homology"/>
<dbReference type="EC" id="2.7.1.39" evidence="1"/>
<dbReference type="EMBL" id="CP001398">
    <property type="protein sequence ID" value="ACS34310.1"/>
    <property type="molecule type" value="Genomic_DNA"/>
</dbReference>
<dbReference type="RefSeq" id="WP_015859419.1">
    <property type="nucleotide sequence ID" value="NC_012804.1"/>
</dbReference>
<dbReference type="SMR" id="C5A1P1"/>
<dbReference type="STRING" id="593117.TGAM_1808"/>
<dbReference type="PaxDb" id="593117-TGAM_1808"/>
<dbReference type="GeneID" id="7987635"/>
<dbReference type="KEGG" id="tga:TGAM_1808"/>
<dbReference type="PATRIC" id="fig|593117.10.peg.1817"/>
<dbReference type="eggNOG" id="arCOG01027">
    <property type="taxonomic scope" value="Archaea"/>
</dbReference>
<dbReference type="HOGENOM" id="CLU_041243_1_1_2"/>
<dbReference type="OrthoDB" id="28273at2157"/>
<dbReference type="UniPathway" id="UPA00050">
    <property type="reaction ID" value="UER00064"/>
</dbReference>
<dbReference type="Proteomes" id="UP000001488">
    <property type="component" value="Chromosome"/>
</dbReference>
<dbReference type="GO" id="GO:0005737">
    <property type="term" value="C:cytoplasm"/>
    <property type="evidence" value="ECO:0007669"/>
    <property type="project" value="UniProtKB-SubCell"/>
</dbReference>
<dbReference type="GO" id="GO:0005524">
    <property type="term" value="F:ATP binding"/>
    <property type="evidence" value="ECO:0007669"/>
    <property type="project" value="UniProtKB-UniRule"/>
</dbReference>
<dbReference type="GO" id="GO:0004413">
    <property type="term" value="F:homoserine kinase activity"/>
    <property type="evidence" value="ECO:0007669"/>
    <property type="project" value="UniProtKB-UniRule"/>
</dbReference>
<dbReference type="GO" id="GO:0009088">
    <property type="term" value="P:threonine biosynthetic process"/>
    <property type="evidence" value="ECO:0007669"/>
    <property type="project" value="UniProtKB-UniRule"/>
</dbReference>
<dbReference type="Gene3D" id="3.30.230.10">
    <property type="match status" value="1"/>
</dbReference>
<dbReference type="Gene3D" id="3.30.70.890">
    <property type="entry name" value="GHMP kinase, C-terminal domain"/>
    <property type="match status" value="1"/>
</dbReference>
<dbReference type="HAMAP" id="MF_00384">
    <property type="entry name" value="Homoser_kinase"/>
    <property type="match status" value="1"/>
</dbReference>
<dbReference type="InterPro" id="IPR013750">
    <property type="entry name" value="GHMP_kinase_C_dom"/>
</dbReference>
<dbReference type="InterPro" id="IPR036554">
    <property type="entry name" value="GHMP_kinase_C_sf"/>
</dbReference>
<dbReference type="InterPro" id="IPR006204">
    <property type="entry name" value="GHMP_kinase_N_dom"/>
</dbReference>
<dbReference type="InterPro" id="IPR000870">
    <property type="entry name" value="Homoserine_kinase"/>
</dbReference>
<dbReference type="InterPro" id="IPR020568">
    <property type="entry name" value="Ribosomal_Su5_D2-typ_SF"/>
</dbReference>
<dbReference type="InterPro" id="IPR014721">
    <property type="entry name" value="Ribsml_uS5_D2-typ_fold_subgr"/>
</dbReference>
<dbReference type="NCBIfam" id="NF002288">
    <property type="entry name" value="PRK01212.1-4"/>
    <property type="match status" value="1"/>
</dbReference>
<dbReference type="NCBIfam" id="TIGR00191">
    <property type="entry name" value="thrB"/>
    <property type="match status" value="1"/>
</dbReference>
<dbReference type="PANTHER" id="PTHR20861:SF1">
    <property type="entry name" value="HOMOSERINE KINASE"/>
    <property type="match status" value="1"/>
</dbReference>
<dbReference type="PANTHER" id="PTHR20861">
    <property type="entry name" value="HOMOSERINE/4-DIPHOSPHOCYTIDYL-2-C-METHYL-D-ERYTHRITOL KINASE"/>
    <property type="match status" value="1"/>
</dbReference>
<dbReference type="Pfam" id="PF08544">
    <property type="entry name" value="GHMP_kinases_C"/>
    <property type="match status" value="1"/>
</dbReference>
<dbReference type="Pfam" id="PF00288">
    <property type="entry name" value="GHMP_kinases_N"/>
    <property type="match status" value="1"/>
</dbReference>
<dbReference type="PIRSF" id="PIRSF000676">
    <property type="entry name" value="Homoser_kin"/>
    <property type="match status" value="1"/>
</dbReference>
<dbReference type="PRINTS" id="PR00958">
    <property type="entry name" value="HOMSERKINASE"/>
</dbReference>
<dbReference type="SUPFAM" id="SSF55060">
    <property type="entry name" value="GHMP Kinase, C-terminal domain"/>
    <property type="match status" value="1"/>
</dbReference>
<dbReference type="SUPFAM" id="SSF54211">
    <property type="entry name" value="Ribosomal protein S5 domain 2-like"/>
    <property type="match status" value="1"/>
</dbReference>
<sequence>MKIRVHATIANFGPGFDVFGVGIGEPYDELSFRESSEWEIRVKGHDVPADVRNTAVVAARALAEMAGEEVALRMKLRKGIRPRSGLGSSGASSLAGALAMARVLGVEDERLILRAAMEGERAASGSAHGDNVVPAYYGDFTILESYEPLRVRRIPVDFDVVAVLPAVEIPTSEARRVLPPKIPLKDAVRNIALASSLVLALKENDLKAVGRLLDDRIALPYRKRLMPWYDRARKAALEAGAYGFSVSGSGPAVFAVGGDVAQIGKAVAEAFEGFGIEVDVYVTKAGRGALWF</sequence>
<organism>
    <name type="scientific">Thermococcus gammatolerans (strain DSM 15229 / JCM 11827 / EJ3)</name>
    <dbReference type="NCBI Taxonomy" id="593117"/>
    <lineage>
        <taxon>Archaea</taxon>
        <taxon>Methanobacteriati</taxon>
        <taxon>Methanobacteriota</taxon>
        <taxon>Thermococci</taxon>
        <taxon>Thermococcales</taxon>
        <taxon>Thermococcaceae</taxon>
        <taxon>Thermococcus</taxon>
    </lineage>
</organism>